<sequence length="451" mass="49440">MKQTAFYQQRRVLVIGLAKSGFAAAKLLHELGAIITVNDQKPFEENKEAQQLEQLGIRVICGGHPLELLDEPFDLVVKNPGIPYTNPMVKKAMEKGLPVVTEVELAYHISEAPFIGITGSNGKTTTTTLIYEMLREGEKRPLLAGNIGTAACEVAKKAEASNWLVTELSSFQLAGIRDFRPRISVLLNIFDAHLDYHGTKEAYAQAKANIFKNQTNEDYAVINADDELVMQLAENIHAQKVAFSATKVLGRGAYINNGFIYWNDEAVIAVADIVLPGKHNLENILAAVAVAKLAGVDNKSIYQVLTTFTGVKHRLQYVATIDGRKFFNDSKATNILATQKALSAFEKDSVILLAGGLDRGNEFDALLPYLHNVKAVVLFGQTAPKIARVAKQAGIETIEYVDNVEKAVPVAYQLSEPGDVILLSPACASWDQYKTFEQRGDIFIGAVHKLK</sequence>
<comment type="function">
    <text evidence="1">Cell wall formation. Catalyzes the addition of glutamate to the nucleotide precursor UDP-N-acetylmuramoyl-L-alanine (UMA).</text>
</comment>
<comment type="catalytic activity">
    <reaction evidence="1">
        <text>UDP-N-acetyl-alpha-D-muramoyl-L-alanine + D-glutamate + ATP = UDP-N-acetyl-alpha-D-muramoyl-L-alanyl-D-glutamate + ADP + phosphate + H(+)</text>
        <dbReference type="Rhea" id="RHEA:16429"/>
        <dbReference type="ChEBI" id="CHEBI:15378"/>
        <dbReference type="ChEBI" id="CHEBI:29986"/>
        <dbReference type="ChEBI" id="CHEBI:30616"/>
        <dbReference type="ChEBI" id="CHEBI:43474"/>
        <dbReference type="ChEBI" id="CHEBI:83898"/>
        <dbReference type="ChEBI" id="CHEBI:83900"/>
        <dbReference type="ChEBI" id="CHEBI:456216"/>
        <dbReference type="EC" id="6.3.2.9"/>
    </reaction>
</comment>
<comment type="pathway">
    <text evidence="1">Cell wall biogenesis; peptidoglycan biosynthesis.</text>
</comment>
<comment type="subcellular location">
    <subcellularLocation>
        <location evidence="1">Cytoplasm</location>
    </subcellularLocation>
</comment>
<comment type="similarity">
    <text evidence="1">Belongs to the MurCDEF family.</text>
</comment>
<keyword id="KW-0067">ATP-binding</keyword>
<keyword id="KW-0131">Cell cycle</keyword>
<keyword id="KW-0132">Cell division</keyword>
<keyword id="KW-0133">Cell shape</keyword>
<keyword id="KW-0961">Cell wall biogenesis/degradation</keyword>
<keyword id="KW-0963">Cytoplasm</keyword>
<keyword id="KW-0436">Ligase</keyword>
<keyword id="KW-0547">Nucleotide-binding</keyword>
<keyword id="KW-0573">Peptidoglycan synthesis</keyword>
<proteinExistence type="inferred from homology"/>
<dbReference type="EC" id="6.3.2.9" evidence="1"/>
<dbReference type="EMBL" id="CP001638">
    <property type="protein sequence ID" value="ACS23879.1"/>
    <property type="molecule type" value="Genomic_DNA"/>
</dbReference>
<dbReference type="SMR" id="C5D8M2"/>
<dbReference type="STRING" id="471223.GWCH70_1019"/>
<dbReference type="KEGG" id="gwc:GWCH70_1019"/>
<dbReference type="eggNOG" id="COG0771">
    <property type="taxonomic scope" value="Bacteria"/>
</dbReference>
<dbReference type="HOGENOM" id="CLU_032540_0_1_9"/>
<dbReference type="OrthoDB" id="9809796at2"/>
<dbReference type="UniPathway" id="UPA00219"/>
<dbReference type="GO" id="GO:0005737">
    <property type="term" value="C:cytoplasm"/>
    <property type="evidence" value="ECO:0007669"/>
    <property type="project" value="UniProtKB-SubCell"/>
</dbReference>
<dbReference type="GO" id="GO:0005524">
    <property type="term" value="F:ATP binding"/>
    <property type="evidence" value="ECO:0007669"/>
    <property type="project" value="UniProtKB-UniRule"/>
</dbReference>
<dbReference type="GO" id="GO:0008764">
    <property type="term" value="F:UDP-N-acetylmuramoylalanine-D-glutamate ligase activity"/>
    <property type="evidence" value="ECO:0007669"/>
    <property type="project" value="UniProtKB-UniRule"/>
</dbReference>
<dbReference type="GO" id="GO:0051301">
    <property type="term" value="P:cell division"/>
    <property type="evidence" value="ECO:0007669"/>
    <property type="project" value="UniProtKB-KW"/>
</dbReference>
<dbReference type="GO" id="GO:0071555">
    <property type="term" value="P:cell wall organization"/>
    <property type="evidence" value="ECO:0007669"/>
    <property type="project" value="UniProtKB-KW"/>
</dbReference>
<dbReference type="GO" id="GO:0009252">
    <property type="term" value="P:peptidoglycan biosynthetic process"/>
    <property type="evidence" value="ECO:0007669"/>
    <property type="project" value="UniProtKB-UniRule"/>
</dbReference>
<dbReference type="GO" id="GO:0008360">
    <property type="term" value="P:regulation of cell shape"/>
    <property type="evidence" value="ECO:0007669"/>
    <property type="project" value="UniProtKB-KW"/>
</dbReference>
<dbReference type="Gene3D" id="3.90.190.20">
    <property type="entry name" value="Mur ligase, C-terminal domain"/>
    <property type="match status" value="1"/>
</dbReference>
<dbReference type="Gene3D" id="3.40.1190.10">
    <property type="entry name" value="Mur-like, catalytic domain"/>
    <property type="match status" value="1"/>
</dbReference>
<dbReference type="Gene3D" id="3.40.50.720">
    <property type="entry name" value="NAD(P)-binding Rossmann-like Domain"/>
    <property type="match status" value="1"/>
</dbReference>
<dbReference type="HAMAP" id="MF_00639">
    <property type="entry name" value="MurD"/>
    <property type="match status" value="1"/>
</dbReference>
<dbReference type="InterPro" id="IPR036565">
    <property type="entry name" value="Mur-like_cat_sf"/>
</dbReference>
<dbReference type="InterPro" id="IPR004101">
    <property type="entry name" value="Mur_ligase_C"/>
</dbReference>
<dbReference type="InterPro" id="IPR036615">
    <property type="entry name" value="Mur_ligase_C_dom_sf"/>
</dbReference>
<dbReference type="InterPro" id="IPR013221">
    <property type="entry name" value="Mur_ligase_cen"/>
</dbReference>
<dbReference type="InterPro" id="IPR005762">
    <property type="entry name" value="MurD"/>
</dbReference>
<dbReference type="NCBIfam" id="TIGR01087">
    <property type="entry name" value="murD"/>
    <property type="match status" value="1"/>
</dbReference>
<dbReference type="PANTHER" id="PTHR43692">
    <property type="entry name" value="UDP-N-ACETYLMURAMOYLALANINE--D-GLUTAMATE LIGASE"/>
    <property type="match status" value="1"/>
</dbReference>
<dbReference type="PANTHER" id="PTHR43692:SF1">
    <property type="entry name" value="UDP-N-ACETYLMURAMOYLALANINE--D-GLUTAMATE LIGASE"/>
    <property type="match status" value="1"/>
</dbReference>
<dbReference type="Pfam" id="PF02875">
    <property type="entry name" value="Mur_ligase_C"/>
    <property type="match status" value="1"/>
</dbReference>
<dbReference type="Pfam" id="PF08245">
    <property type="entry name" value="Mur_ligase_M"/>
    <property type="match status" value="1"/>
</dbReference>
<dbReference type="Pfam" id="PF21799">
    <property type="entry name" value="MurD-like_N"/>
    <property type="match status" value="1"/>
</dbReference>
<dbReference type="SUPFAM" id="SSF51984">
    <property type="entry name" value="MurCD N-terminal domain"/>
    <property type="match status" value="1"/>
</dbReference>
<dbReference type="SUPFAM" id="SSF53623">
    <property type="entry name" value="MurD-like peptide ligases, catalytic domain"/>
    <property type="match status" value="1"/>
</dbReference>
<dbReference type="SUPFAM" id="SSF53244">
    <property type="entry name" value="MurD-like peptide ligases, peptide-binding domain"/>
    <property type="match status" value="1"/>
</dbReference>
<accession>C5D8M2</accession>
<gene>
    <name evidence="1" type="primary">murD</name>
    <name type="ordered locus">GWCH70_1019</name>
</gene>
<organism>
    <name type="scientific">Geobacillus sp. (strain WCH70)</name>
    <dbReference type="NCBI Taxonomy" id="471223"/>
    <lineage>
        <taxon>Bacteria</taxon>
        <taxon>Bacillati</taxon>
        <taxon>Bacillota</taxon>
        <taxon>Bacilli</taxon>
        <taxon>Bacillales</taxon>
        <taxon>Anoxybacillaceae</taxon>
        <taxon>Geobacillus</taxon>
    </lineage>
</organism>
<reference key="1">
    <citation type="submission" date="2009-06" db="EMBL/GenBank/DDBJ databases">
        <title>Complete sequence of chromosome of Geopacillus sp. WCH70.</title>
        <authorList>
            <consortium name="US DOE Joint Genome Institute"/>
            <person name="Lucas S."/>
            <person name="Copeland A."/>
            <person name="Lapidus A."/>
            <person name="Glavina del Rio T."/>
            <person name="Dalin E."/>
            <person name="Tice H."/>
            <person name="Bruce D."/>
            <person name="Goodwin L."/>
            <person name="Pitluck S."/>
            <person name="Chertkov O."/>
            <person name="Brettin T."/>
            <person name="Detter J.C."/>
            <person name="Han C."/>
            <person name="Larimer F."/>
            <person name="Land M."/>
            <person name="Hauser L."/>
            <person name="Kyrpides N."/>
            <person name="Mikhailova N."/>
            <person name="Brumm P."/>
            <person name="Mead D.A."/>
            <person name="Richardson P."/>
        </authorList>
    </citation>
    <scope>NUCLEOTIDE SEQUENCE [LARGE SCALE GENOMIC DNA]</scope>
    <source>
        <strain>WCH70</strain>
    </source>
</reference>
<name>MURD_GEOSW</name>
<evidence type="ECO:0000255" key="1">
    <source>
        <dbReference type="HAMAP-Rule" id="MF_00639"/>
    </source>
</evidence>
<feature type="chain" id="PRO_1000212373" description="UDP-N-acetylmuramoylalanine--D-glutamate ligase">
    <location>
        <begin position="1"/>
        <end position="451"/>
    </location>
</feature>
<feature type="binding site" evidence="1">
    <location>
        <begin position="119"/>
        <end position="125"/>
    </location>
    <ligand>
        <name>ATP</name>
        <dbReference type="ChEBI" id="CHEBI:30616"/>
    </ligand>
</feature>
<protein>
    <recommendedName>
        <fullName evidence="1">UDP-N-acetylmuramoylalanine--D-glutamate ligase</fullName>
        <ecNumber evidence="1">6.3.2.9</ecNumber>
    </recommendedName>
    <alternativeName>
        <fullName evidence="1">D-glutamic acid-adding enzyme</fullName>
    </alternativeName>
    <alternativeName>
        <fullName evidence="1">UDP-N-acetylmuramoyl-L-alanyl-D-glutamate synthetase</fullName>
    </alternativeName>
</protein>